<comment type="function">
    <text evidence="1 4">Transcription factor involved in developmental processes (By similarity). Controls the transcription of genes required for excretory canal formation (PubMed:23334499).</text>
</comment>
<comment type="subcellular location">
    <subcellularLocation>
        <location evidence="5">Nucleus</location>
    </subcellularLocation>
</comment>
<comment type="developmental stage">
    <text evidence="4">Expressed in the excretory cell at the 1.5-fold embryonic stage and throughout larval development.</text>
</comment>
<comment type="domain">
    <text evidence="2">The Prospero-type homeodomain and the adjacent Prospero domain act as a single structural unit, the Homeo-Prospero domain.</text>
</comment>
<comment type="disruption phenotype">
    <text evidence="4">Lethality at larval stage, L1. Surviving animals do not develop into fertile adults. Animals have abnormal sensory function with their bodies harboring lesions and signs of progressive degradation. Defective excretory canal formation with down-regulation of genes, including exc-5, ifb-1, gck-3 and aqp-8, involved in this process. Seventy percent of L1 larvae do not form excretory canals, but have a large vacuole around the excretory cell body. The remaining larvae form impaired excretory canals that rarely extend beyond the pharyngeal-intestinal valve and do not extend to the somatic gonad. Furthermore, some animals develop a cyst in the lumen of the excretory canal. RNAi-mediated knockdown in larvae largely results in arrest at the L1 larval stage. Surviving worms have altered excretory canal growth with a large vacuole and cyst in the excretory cell body and lumen, respectively, and the formation of a thin canal extension.</text>
</comment>
<comment type="similarity">
    <text evidence="2">Belongs to the Prospero homeodomain family.</text>
</comment>
<dbReference type="EMBL" id="FO081380">
    <property type="protein sequence ID" value="CCD71202.1"/>
    <property type="molecule type" value="Genomic_DNA"/>
</dbReference>
<dbReference type="PIR" id="S44850">
    <property type="entry name" value="S44850"/>
</dbReference>
<dbReference type="RefSeq" id="NP_498760.2">
    <property type="nucleotide sequence ID" value="NM_066359.5"/>
</dbReference>
<dbReference type="SMR" id="P34522"/>
<dbReference type="BioGRID" id="41343">
    <property type="interactions" value="4"/>
</dbReference>
<dbReference type="FunCoup" id="P34522">
    <property type="interactions" value="176"/>
</dbReference>
<dbReference type="IntAct" id="P34522">
    <property type="interactions" value="1"/>
</dbReference>
<dbReference type="MINT" id="P34522"/>
<dbReference type="STRING" id="6239.K12H4.1.1"/>
<dbReference type="PaxDb" id="6239-K12H4.1"/>
<dbReference type="PeptideAtlas" id="P34522"/>
<dbReference type="EnsemblMetazoa" id="K12H4.1.1">
    <property type="protein sequence ID" value="K12H4.1.1"/>
    <property type="gene ID" value="WBGene00000448"/>
</dbReference>
<dbReference type="GeneID" id="176137"/>
<dbReference type="KEGG" id="cel:CELE_K12H4.1"/>
<dbReference type="UCSC" id="K12H4.1">
    <property type="organism name" value="c. elegans"/>
</dbReference>
<dbReference type="AGR" id="WB:WBGene00000448"/>
<dbReference type="CTD" id="176137"/>
<dbReference type="WormBase" id="K12H4.1">
    <property type="protein sequence ID" value="CE45017"/>
    <property type="gene ID" value="WBGene00000448"/>
    <property type="gene designation" value="pros-1"/>
</dbReference>
<dbReference type="eggNOG" id="KOG3779">
    <property type="taxonomic scope" value="Eukaryota"/>
</dbReference>
<dbReference type="GeneTree" id="ENSGT00940000154790"/>
<dbReference type="HOGENOM" id="CLU_443616_0_0_1"/>
<dbReference type="InParanoid" id="P34522"/>
<dbReference type="OMA" id="DGEDSHE"/>
<dbReference type="OrthoDB" id="10038576at2759"/>
<dbReference type="PRO" id="PR:P34522"/>
<dbReference type="Proteomes" id="UP000001940">
    <property type="component" value="Chromosome III"/>
</dbReference>
<dbReference type="Bgee" id="WBGene00000448">
    <property type="expression patterns" value="Expressed in pharyngeal muscle cell (C elegans) and 3 other cell types or tissues"/>
</dbReference>
<dbReference type="GO" id="GO:0005634">
    <property type="term" value="C:nucleus"/>
    <property type="evidence" value="ECO:0000314"/>
    <property type="project" value="WormBase"/>
</dbReference>
<dbReference type="GO" id="GO:0000981">
    <property type="term" value="F:DNA-binding transcription factor activity, RNA polymerase II-specific"/>
    <property type="evidence" value="ECO:0000250"/>
    <property type="project" value="WormBase"/>
</dbReference>
<dbReference type="GO" id="GO:0000978">
    <property type="term" value="F:RNA polymerase II cis-regulatory region sequence-specific DNA binding"/>
    <property type="evidence" value="ECO:0000318"/>
    <property type="project" value="GO_Central"/>
</dbReference>
<dbReference type="GO" id="GO:0021782">
    <property type="term" value="P:glial cell development"/>
    <property type="evidence" value="ECO:0000315"/>
    <property type="project" value="WormBase"/>
</dbReference>
<dbReference type="GO" id="GO:0006357">
    <property type="term" value="P:regulation of transcription by RNA polymerase II"/>
    <property type="evidence" value="ECO:0000250"/>
    <property type="project" value="WormBase"/>
</dbReference>
<dbReference type="FunFam" id="1.10.10.500:FF:000002">
    <property type="entry name" value="Prospero homeobox 3"/>
    <property type="match status" value="1"/>
</dbReference>
<dbReference type="Gene3D" id="1.10.10.500">
    <property type="entry name" value="Homeo-prospero domain"/>
    <property type="match status" value="1"/>
</dbReference>
<dbReference type="InterPro" id="IPR023082">
    <property type="entry name" value="Homeo_prospero_dom"/>
</dbReference>
<dbReference type="InterPro" id="IPR037131">
    <property type="entry name" value="Homeo_prospero_dom_sf"/>
</dbReference>
<dbReference type="InterPro" id="IPR009057">
    <property type="entry name" value="Homeodomain-like_sf"/>
</dbReference>
<dbReference type="InterPro" id="IPR039350">
    <property type="entry name" value="Prospero_homeodomain"/>
</dbReference>
<dbReference type="PANTHER" id="PTHR12198:SF0">
    <property type="entry name" value="HOMEOBOX PROTEIN PROSPERO"/>
    <property type="match status" value="1"/>
</dbReference>
<dbReference type="PANTHER" id="PTHR12198">
    <property type="entry name" value="HOMEOBOX PROTEIN PROSPERO/PROX-1/CEH-26"/>
    <property type="match status" value="1"/>
</dbReference>
<dbReference type="Pfam" id="PF05044">
    <property type="entry name" value="HPD"/>
    <property type="match status" value="1"/>
</dbReference>
<dbReference type="SUPFAM" id="SSF46689">
    <property type="entry name" value="Homeodomain-like"/>
    <property type="match status" value="1"/>
</dbReference>
<dbReference type="PROSITE" id="PS51818">
    <property type="entry name" value="HOMEO_PROSPERO"/>
    <property type="match status" value="1"/>
</dbReference>
<sequence>MSSGLPSIAATAQPSANGFSFNNGFPPFGIYYSQLPPVNSNGSTPNSSNRFKVKRHRQRVDAGEPRNTYQGASTSVSSNSSSSSSTSNTNSTPSSSSTSSKKSTEGMTETETMTASIEQEKVIQNEESEAGKDGMEEHDDGMNDFEIIDDTNDEVEESEERESPESNSSSASKRKSFQPQKIGEELGIEFGDETEQINVTVGGTEEAEETTDEAEGRELSALQAQLQNGHIAEQQRRFYAAFLDQQRKQVAAAQILHNGKINIERLVSSVKGDLVTNFMKDLEKVIRDWAADEVLKQEAAAPPQIPQPPPQFHPIFPANPLFHMAPPHHPVAGGGIFPPNFNAFNAFNALRRNLQDVDTSSEMKKKRTKVEIKKEDAMSSRASPLSASASPPLSRFFPAPTMVGHYGGMNFGDREDSPTNSDELSECGYEGGGSSSMLTPMHLRKAKLMFFYTRYPNSNLLKSYFPDIRFNKNNTAQLVKWFSNFREFYYNQMEKFARQALAEGITDRNDIFVSKDSELFKVLNTHYNRNNHIKAPDRLVFVVQETLREFHDAIKQGKDIEPSWKKTIYKVINRLEDQIPDFFKEPNFLERLET</sequence>
<protein>
    <recommendedName>
        <fullName evidence="6">Homeobox protein prospero homolog 1</fullName>
    </recommendedName>
    <alternativeName>
        <fullName evidence="5">Homeobox protein ceh-26</fullName>
    </alternativeName>
</protein>
<reference key="1">
    <citation type="journal article" date="1994" name="Nature">
        <title>2.2 Mb of contiguous nucleotide sequence from chromosome III of C. elegans.</title>
        <authorList>
            <person name="Wilson R."/>
            <person name="Ainscough R."/>
            <person name="Anderson K."/>
            <person name="Baynes C."/>
            <person name="Berks M."/>
            <person name="Bonfield J."/>
            <person name="Burton J."/>
            <person name="Connell M."/>
            <person name="Copsey T."/>
            <person name="Cooper J."/>
            <person name="Coulson A."/>
            <person name="Craxton M."/>
            <person name="Dear S."/>
            <person name="Du Z."/>
            <person name="Durbin R."/>
            <person name="Favello A."/>
            <person name="Fraser A."/>
            <person name="Fulton L."/>
            <person name="Gardner A."/>
            <person name="Green P."/>
            <person name="Hawkins T."/>
            <person name="Hillier L."/>
            <person name="Jier M."/>
            <person name="Johnston L."/>
            <person name="Jones M."/>
            <person name="Kershaw J."/>
            <person name="Kirsten J."/>
            <person name="Laisster N."/>
            <person name="Latreille P."/>
            <person name="Lightning J."/>
            <person name="Lloyd C."/>
            <person name="Mortimore B."/>
            <person name="O'Callaghan M."/>
            <person name="Parsons J."/>
            <person name="Percy C."/>
            <person name="Rifken L."/>
            <person name="Roopra A."/>
            <person name="Saunders D."/>
            <person name="Shownkeen R."/>
            <person name="Sims M."/>
            <person name="Smaldon N."/>
            <person name="Smith A."/>
            <person name="Smith M."/>
            <person name="Sonnhammer E."/>
            <person name="Staden R."/>
            <person name="Sulston J."/>
            <person name="Thierry-Mieg J."/>
            <person name="Thomas K."/>
            <person name="Vaudin M."/>
            <person name="Vaughan K."/>
            <person name="Waterston R."/>
            <person name="Watson A."/>
            <person name="Weinstock L."/>
            <person name="Wilkinson-Sproat J."/>
            <person name="Wohldman P."/>
        </authorList>
    </citation>
    <scope>NUCLEOTIDE SEQUENCE [LARGE SCALE GENOMIC DNA]</scope>
    <source>
        <strain>Bristol N2</strain>
    </source>
</reference>
<reference key="2">
    <citation type="journal article" date="1998" name="Science">
        <title>Genome sequence of the nematode C. elegans: a platform for investigating biology.</title>
        <authorList>
            <consortium name="The C. elegans sequencing consortium"/>
        </authorList>
    </citation>
    <scope>NUCLEOTIDE SEQUENCE [LARGE SCALE GENOMIC DNA]</scope>
    <source>
        <strain>Bristol N2</strain>
    </source>
</reference>
<reference key="3">
    <citation type="journal article" date="1994" name="Trends Biochem. Sci.">
        <title>A Caenorhabditis elegans prospero homologue defines a novel domain.</title>
        <authorList>
            <person name="Buerglin T.R."/>
        </authorList>
    </citation>
    <scope>SIMILARITY TO DROSOPHILA PROSPERO</scope>
</reference>
<reference key="4">
    <citation type="journal article" date="2013" name="Nat. Cell Biol.">
        <title>A pathway for unicellular tube extension depending on the lymphatic vessel determinant Prox1 and on osmoregulation.</title>
        <authorList>
            <person name="Kolotuev I."/>
            <person name="Hyenne V."/>
            <person name="Schwab Y."/>
            <person name="Rodriguez D."/>
            <person name="Labouesse M."/>
        </authorList>
    </citation>
    <scope>FUNCTION</scope>
    <scope>DEVELOPMENTAL STAGE</scope>
    <scope>DISRUPTION PHENOTYPE</scope>
</reference>
<proteinExistence type="evidence at transcript level"/>
<keyword id="KW-0217">Developmental protein</keyword>
<keyword id="KW-0238">DNA-binding</keyword>
<keyword id="KW-0371">Homeobox</keyword>
<keyword id="KW-0539">Nucleus</keyword>
<keyword id="KW-1185">Reference proteome</keyword>
<keyword id="KW-0804">Transcription</keyword>
<keyword id="KW-0805">Transcription regulation</keyword>
<gene>
    <name evidence="6" type="primary">pros-1</name>
    <name evidence="6" type="synonym">ceh-26</name>
    <name evidence="6" type="ORF">K12H4.1</name>
</gene>
<name>PROS1_CAEEL</name>
<evidence type="ECO:0000250" key="1">
    <source>
        <dbReference type="UniProtKB" id="Q92786"/>
    </source>
</evidence>
<evidence type="ECO:0000255" key="2">
    <source>
        <dbReference type="PROSITE-ProRule" id="PRU01162"/>
    </source>
</evidence>
<evidence type="ECO:0000256" key="3">
    <source>
        <dbReference type="SAM" id="MobiDB-lite"/>
    </source>
</evidence>
<evidence type="ECO:0000269" key="4">
    <source>
    </source>
</evidence>
<evidence type="ECO:0000305" key="5"/>
<evidence type="ECO:0000312" key="6">
    <source>
        <dbReference type="WormBase" id="K12H4.1"/>
    </source>
</evidence>
<accession>P34522</accession>
<feature type="chain" id="PRO_0000208883" description="Homeobox protein prospero homolog 1" evidence="5">
    <location>
        <begin position="1"/>
        <end position="594"/>
    </location>
</feature>
<feature type="domain" description="Prospero-type homeo" evidence="2">
    <location>
        <begin position="435"/>
        <end position="493"/>
    </location>
</feature>
<feature type="domain" description="Prospero" evidence="2">
    <location>
        <begin position="494"/>
        <end position="593"/>
    </location>
</feature>
<feature type="region of interest" description="Disordered" evidence="3">
    <location>
        <begin position="1"/>
        <end position="20"/>
    </location>
</feature>
<feature type="region of interest" description="Disordered" evidence="3">
    <location>
        <begin position="30"/>
        <end position="180"/>
    </location>
</feature>
<feature type="region of interest" description="Disordered" evidence="3">
    <location>
        <begin position="358"/>
        <end position="389"/>
    </location>
</feature>
<feature type="region of interest" description="Homeo-Prospero" evidence="2">
    <location>
        <begin position="435"/>
        <end position="593"/>
    </location>
</feature>
<feature type="compositionally biased region" description="Polar residues" evidence="3">
    <location>
        <begin position="1"/>
        <end position="13"/>
    </location>
</feature>
<feature type="compositionally biased region" description="Polar residues" evidence="3">
    <location>
        <begin position="36"/>
        <end position="50"/>
    </location>
</feature>
<feature type="compositionally biased region" description="Low complexity" evidence="3">
    <location>
        <begin position="73"/>
        <end position="101"/>
    </location>
</feature>
<feature type="compositionally biased region" description="Polar residues" evidence="3">
    <location>
        <begin position="105"/>
        <end position="117"/>
    </location>
</feature>
<feature type="compositionally biased region" description="Basic and acidic residues" evidence="3">
    <location>
        <begin position="118"/>
        <end position="135"/>
    </location>
</feature>
<feature type="compositionally biased region" description="Acidic residues" evidence="3">
    <location>
        <begin position="136"/>
        <end position="162"/>
    </location>
</feature>
<feature type="compositionally biased region" description="Basic and acidic residues" evidence="3">
    <location>
        <begin position="369"/>
        <end position="378"/>
    </location>
</feature>
<feature type="compositionally biased region" description="Low complexity" evidence="3">
    <location>
        <begin position="379"/>
        <end position="389"/>
    </location>
</feature>
<organism>
    <name type="scientific">Caenorhabditis elegans</name>
    <dbReference type="NCBI Taxonomy" id="6239"/>
    <lineage>
        <taxon>Eukaryota</taxon>
        <taxon>Metazoa</taxon>
        <taxon>Ecdysozoa</taxon>
        <taxon>Nematoda</taxon>
        <taxon>Chromadorea</taxon>
        <taxon>Rhabditida</taxon>
        <taxon>Rhabditina</taxon>
        <taxon>Rhabditomorpha</taxon>
        <taxon>Rhabditoidea</taxon>
        <taxon>Rhabditidae</taxon>
        <taxon>Peloderinae</taxon>
        <taxon>Caenorhabditis</taxon>
    </lineage>
</organism>